<dbReference type="EMBL" id="AY522331">
    <property type="status" value="NOT_ANNOTATED_CDS"/>
    <property type="molecule type" value="Genomic_DNA"/>
</dbReference>
<dbReference type="RefSeq" id="YP_009305293.1">
    <property type="nucleotide sequence ID" value="NC_031333.1"/>
</dbReference>
<dbReference type="SMR" id="P0C395"/>
<dbReference type="GeneID" id="29141349"/>
<dbReference type="GO" id="GO:0009535">
    <property type="term" value="C:chloroplast thylakoid membrane"/>
    <property type="evidence" value="ECO:0007669"/>
    <property type="project" value="UniProtKB-SubCell"/>
</dbReference>
<dbReference type="GO" id="GO:0009512">
    <property type="term" value="C:cytochrome b6f complex"/>
    <property type="evidence" value="ECO:0007669"/>
    <property type="project" value="InterPro"/>
</dbReference>
<dbReference type="GO" id="GO:0009536">
    <property type="term" value="C:plastid"/>
    <property type="evidence" value="ECO:0000305"/>
    <property type="project" value="Gramene"/>
</dbReference>
<dbReference type="GO" id="GO:0045158">
    <property type="term" value="F:electron transporter, transferring electrons within cytochrome b6/f complex of photosystem II activity"/>
    <property type="evidence" value="ECO:0007669"/>
    <property type="project" value="InterPro"/>
</dbReference>
<dbReference type="GO" id="GO:0017004">
    <property type="term" value="P:cytochrome complex assembly"/>
    <property type="evidence" value="ECO:0007669"/>
    <property type="project" value="UniProtKB-UniRule"/>
</dbReference>
<dbReference type="GO" id="GO:0015979">
    <property type="term" value="P:photosynthesis"/>
    <property type="evidence" value="ECO:0007669"/>
    <property type="project" value="UniProtKB-KW"/>
</dbReference>
<dbReference type="HAMAP" id="MF_00395">
    <property type="entry name" value="Cytb6_f_PetN"/>
    <property type="match status" value="1"/>
</dbReference>
<dbReference type="InterPro" id="IPR036143">
    <property type="entry name" value="Cytochr_b6-f_cplx_su8_sf"/>
</dbReference>
<dbReference type="InterPro" id="IPR005497">
    <property type="entry name" value="Cytochrome_b6-f_cplx_su8"/>
</dbReference>
<dbReference type="Pfam" id="PF03742">
    <property type="entry name" value="PetN"/>
    <property type="match status" value="1"/>
</dbReference>
<dbReference type="SUPFAM" id="SSF103451">
    <property type="entry name" value="PetN subunit of the cytochrome b6f complex"/>
    <property type="match status" value="1"/>
</dbReference>
<organism>
    <name type="scientific">Oryza sativa</name>
    <name type="common">Rice</name>
    <dbReference type="NCBI Taxonomy" id="4530"/>
    <lineage>
        <taxon>Eukaryota</taxon>
        <taxon>Viridiplantae</taxon>
        <taxon>Streptophyta</taxon>
        <taxon>Embryophyta</taxon>
        <taxon>Tracheophyta</taxon>
        <taxon>Spermatophyta</taxon>
        <taxon>Magnoliopsida</taxon>
        <taxon>Liliopsida</taxon>
        <taxon>Poales</taxon>
        <taxon>Poaceae</taxon>
        <taxon>BOP clade</taxon>
        <taxon>Oryzoideae</taxon>
        <taxon>Oryzeae</taxon>
        <taxon>Oryzinae</taxon>
        <taxon>Oryza</taxon>
    </lineage>
</organism>
<name>PETN_ORYSA</name>
<comment type="function">
    <text evidence="1">Component of the cytochrome b6-f complex, which mediates electron transfer between photosystem II (PSII) and photosystem I (PSI), cyclic electron flow around PSI, and state transitions.</text>
</comment>
<comment type="subunit">
    <text evidence="1">The 4 large subunits of the cytochrome b6-f complex are cytochrome b6, subunit IV (17 kDa polypeptide, PetD), cytochrome f and the Rieske protein, while the 4 small subunits are PetG, PetL, PetM and PetN. The complex functions as a dimer (By similarity).</text>
</comment>
<comment type="subcellular location">
    <subcellularLocation>
        <location evidence="1">Plastid</location>
        <location evidence="1">Chloroplast thylakoid membrane</location>
        <topology evidence="1">Single-pass membrane protein</topology>
    </subcellularLocation>
</comment>
<comment type="similarity">
    <text evidence="3">Belongs to the PetN family.</text>
</comment>
<feature type="chain" id="PRO_0000289026" description="Cytochrome b6-f complex subunit 8">
    <location>
        <begin position="1"/>
        <end position="29"/>
    </location>
</feature>
<feature type="transmembrane region" description="Helical" evidence="2">
    <location>
        <begin position="3"/>
        <end position="23"/>
    </location>
</feature>
<geneLocation type="chloroplast"/>
<evidence type="ECO:0000250" key="1"/>
<evidence type="ECO:0000255" key="2"/>
<evidence type="ECO:0000305" key="3"/>
<protein>
    <recommendedName>
        <fullName>Cytochrome b6-f complex subunit 8</fullName>
    </recommendedName>
    <alternativeName>
        <fullName>Cytochrome b6-f complex subunit PetN</fullName>
    </alternativeName>
    <alternativeName>
        <fullName>Cytochrome b6-f complex subunit VIII</fullName>
    </alternativeName>
</protein>
<reference key="1">
    <citation type="journal article" date="2004" name="Plant Physiol.">
        <title>A comparison of rice chloroplast genomes.</title>
        <authorList>
            <person name="Tang J."/>
            <person name="Xia H."/>
            <person name="Cao M."/>
            <person name="Zhang X."/>
            <person name="Zeng W."/>
            <person name="Hu S."/>
            <person name="Tong W."/>
            <person name="Wang J."/>
            <person name="Wang J."/>
            <person name="Yu J."/>
            <person name="Yang H."/>
            <person name="Zhu L."/>
        </authorList>
    </citation>
    <scope>NUCLEOTIDE SEQUENCE [LARGE SCALE GENOMIC DNA]</scope>
    <source>
        <strain>cv. PA64s</strain>
    </source>
</reference>
<sequence>MDIVSLAWAALMVVFTFSLSLVVWGRSGL</sequence>
<accession>P0C395</accession>
<keyword id="KW-0150">Chloroplast</keyword>
<keyword id="KW-0249">Electron transport</keyword>
<keyword id="KW-0472">Membrane</keyword>
<keyword id="KW-0602">Photosynthesis</keyword>
<keyword id="KW-0934">Plastid</keyword>
<keyword id="KW-0793">Thylakoid</keyword>
<keyword id="KW-0812">Transmembrane</keyword>
<keyword id="KW-1133">Transmembrane helix</keyword>
<keyword id="KW-0813">Transport</keyword>
<gene>
    <name type="primary">petN</name>
</gene>
<proteinExistence type="inferred from homology"/>